<comment type="function">
    <text evidence="1">Catalyzes the transfer of the L-Ara4N moiety of the glycolipid undecaprenyl phosphate-alpha-L-Ara4N to lipid A. The modified arabinose is attached to lipid A and is required for resistance to polymyxin and cationic antimicrobial peptides.</text>
</comment>
<comment type="catalytic activity">
    <reaction evidence="1">
        <text>4-amino-4-deoxy-alpha-L-arabinopyranosyl di-trans,octa-cis-undecaprenyl phosphate + lipid IVA = lipid IIA + di-trans,octa-cis-undecaprenyl phosphate.</text>
        <dbReference type="EC" id="2.4.2.43"/>
    </reaction>
</comment>
<comment type="pathway">
    <text evidence="1">Lipopolysaccharide metabolism; 4-amino-4-deoxy-beta-L-arabinose-lipid A biosynthesis.</text>
</comment>
<comment type="subcellular location">
    <subcellularLocation>
        <location evidence="1">Cell inner membrane</location>
        <topology evidence="1">Multi-pass membrane protein</topology>
    </subcellularLocation>
</comment>
<comment type="similarity">
    <text evidence="1">Belongs to the glycosyltransferase 83 family.</text>
</comment>
<proteinExistence type="inferred from homology"/>
<protein>
    <recommendedName>
        <fullName evidence="1">Undecaprenyl phosphate-alpha-4-amino-4-deoxy-L-arabinose arabinosyl transferase</fullName>
        <ecNumber evidence="1">2.4.2.43</ecNumber>
    </recommendedName>
    <alternativeName>
        <fullName evidence="1">4-amino-4-deoxy-L-arabinose lipid A transferase</fullName>
    </alternativeName>
    <alternativeName>
        <fullName evidence="1">Lipid IV(A) 4-amino-4-deoxy-L-arabinosyltransferase</fullName>
    </alternativeName>
    <alternativeName>
        <fullName evidence="1">Undecaprenyl phosphate-alpha-L-Ara4N transferase</fullName>
    </alternativeName>
</protein>
<dbReference type="EC" id="2.4.2.43" evidence="1"/>
<dbReference type="EMBL" id="CU928145">
    <property type="protein sequence ID" value="CAU98372.1"/>
    <property type="molecule type" value="Genomic_DNA"/>
</dbReference>
<dbReference type="RefSeq" id="WP_000844027.1">
    <property type="nucleotide sequence ID" value="NC_011748.1"/>
</dbReference>
<dbReference type="SMR" id="B7LAS2"/>
<dbReference type="CAZy" id="GT83">
    <property type="family name" value="Glycosyltransferase Family 83"/>
</dbReference>
<dbReference type="KEGG" id="eck:EC55989_2504"/>
<dbReference type="HOGENOM" id="CLU_019200_2_1_6"/>
<dbReference type="UniPathway" id="UPA00037"/>
<dbReference type="Proteomes" id="UP000000746">
    <property type="component" value="Chromosome"/>
</dbReference>
<dbReference type="GO" id="GO:0005886">
    <property type="term" value="C:plasma membrane"/>
    <property type="evidence" value="ECO:0007669"/>
    <property type="project" value="UniProtKB-SubCell"/>
</dbReference>
<dbReference type="GO" id="GO:0103015">
    <property type="term" value="F:4-amino-4-deoxy-L-arabinose transferase activity"/>
    <property type="evidence" value="ECO:0007669"/>
    <property type="project" value="UniProtKB-EC"/>
</dbReference>
<dbReference type="GO" id="GO:0000030">
    <property type="term" value="F:mannosyltransferase activity"/>
    <property type="evidence" value="ECO:0007669"/>
    <property type="project" value="InterPro"/>
</dbReference>
<dbReference type="GO" id="GO:0009245">
    <property type="term" value="P:lipid A biosynthetic process"/>
    <property type="evidence" value="ECO:0007669"/>
    <property type="project" value="UniProtKB-UniRule"/>
</dbReference>
<dbReference type="GO" id="GO:0009103">
    <property type="term" value="P:lipopolysaccharide biosynthetic process"/>
    <property type="evidence" value="ECO:0007669"/>
    <property type="project" value="UniProtKB-KW"/>
</dbReference>
<dbReference type="GO" id="GO:0006493">
    <property type="term" value="P:protein O-linked glycosylation"/>
    <property type="evidence" value="ECO:0007669"/>
    <property type="project" value="InterPro"/>
</dbReference>
<dbReference type="GO" id="GO:0010041">
    <property type="term" value="P:response to iron(III) ion"/>
    <property type="evidence" value="ECO:0007669"/>
    <property type="project" value="TreeGrafter"/>
</dbReference>
<dbReference type="HAMAP" id="MF_01165">
    <property type="entry name" value="ArnT_transfer"/>
    <property type="match status" value="1"/>
</dbReference>
<dbReference type="InterPro" id="IPR022839">
    <property type="entry name" value="ArnT_tfrase"/>
</dbReference>
<dbReference type="InterPro" id="IPR003342">
    <property type="entry name" value="Glyco_trans_39/83"/>
</dbReference>
<dbReference type="InterPro" id="IPR050297">
    <property type="entry name" value="LipidA_mod_glycosyltrf_83"/>
</dbReference>
<dbReference type="NCBIfam" id="NF009784">
    <property type="entry name" value="PRK13279.1"/>
    <property type="match status" value="1"/>
</dbReference>
<dbReference type="PANTHER" id="PTHR33908">
    <property type="entry name" value="MANNOSYLTRANSFERASE YKCB-RELATED"/>
    <property type="match status" value="1"/>
</dbReference>
<dbReference type="PANTHER" id="PTHR33908:SF3">
    <property type="entry name" value="UNDECAPRENYL PHOSPHATE-ALPHA-4-AMINO-4-DEOXY-L-ARABINOSE ARABINOSYL TRANSFERASE"/>
    <property type="match status" value="1"/>
</dbReference>
<dbReference type="Pfam" id="PF02366">
    <property type="entry name" value="PMT"/>
    <property type="match status" value="1"/>
</dbReference>
<accession>B7LAS2</accession>
<reference key="1">
    <citation type="journal article" date="2009" name="PLoS Genet.">
        <title>Organised genome dynamics in the Escherichia coli species results in highly diverse adaptive paths.</title>
        <authorList>
            <person name="Touchon M."/>
            <person name="Hoede C."/>
            <person name="Tenaillon O."/>
            <person name="Barbe V."/>
            <person name="Baeriswyl S."/>
            <person name="Bidet P."/>
            <person name="Bingen E."/>
            <person name="Bonacorsi S."/>
            <person name="Bouchier C."/>
            <person name="Bouvet O."/>
            <person name="Calteau A."/>
            <person name="Chiapello H."/>
            <person name="Clermont O."/>
            <person name="Cruveiller S."/>
            <person name="Danchin A."/>
            <person name="Diard M."/>
            <person name="Dossat C."/>
            <person name="Karoui M.E."/>
            <person name="Frapy E."/>
            <person name="Garry L."/>
            <person name="Ghigo J.M."/>
            <person name="Gilles A.M."/>
            <person name="Johnson J."/>
            <person name="Le Bouguenec C."/>
            <person name="Lescat M."/>
            <person name="Mangenot S."/>
            <person name="Martinez-Jehanne V."/>
            <person name="Matic I."/>
            <person name="Nassif X."/>
            <person name="Oztas S."/>
            <person name="Petit M.A."/>
            <person name="Pichon C."/>
            <person name="Rouy Z."/>
            <person name="Ruf C.S."/>
            <person name="Schneider D."/>
            <person name="Tourret J."/>
            <person name="Vacherie B."/>
            <person name="Vallenet D."/>
            <person name="Medigue C."/>
            <person name="Rocha E.P.C."/>
            <person name="Denamur E."/>
        </authorList>
    </citation>
    <scope>NUCLEOTIDE SEQUENCE [LARGE SCALE GENOMIC DNA]</scope>
    <source>
        <strain>55989 / EAEC</strain>
    </source>
</reference>
<name>ARNT_ECO55</name>
<organism>
    <name type="scientific">Escherichia coli (strain 55989 / EAEC)</name>
    <dbReference type="NCBI Taxonomy" id="585055"/>
    <lineage>
        <taxon>Bacteria</taxon>
        <taxon>Pseudomonadati</taxon>
        <taxon>Pseudomonadota</taxon>
        <taxon>Gammaproteobacteria</taxon>
        <taxon>Enterobacterales</taxon>
        <taxon>Enterobacteriaceae</taxon>
        <taxon>Escherichia</taxon>
    </lineage>
</organism>
<evidence type="ECO:0000255" key="1">
    <source>
        <dbReference type="HAMAP-Rule" id="MF_01165"/>
    </source>
</evidence>
<feature type="chain" id="PRO_0000379997" description="Undecaprenyl phosphate-alpha-4-amino-4-deoxy-L-arabinose arabinosyl transferase">
    <location>
        <begin position="1"/>
        <end position="550"/>
    </location>
</feature>
<feature type="transmembrane region" description="Helical" evidence="1">
    <location>
        <begin position="7"/>
        <end position="27"/>
    </location>
</feature>
<feature type="transmembrane region" description="Helical" evidence="1">
    <location>
        <begin position="81"/>
        <end position="101"/>
    </location>
</feature>
<feature type="transmembrane region" description="Helical" evidence="1">
    <location>
        <begin position="111"/>
        <end position="133"/>
    </location>
</feature>
<feature type="transmembrane region" description="Helical" evidence="1">
    <location>
        <begin position="137"/>
        <end position="154"/>
    </location>
</feature>
<feature type="transmembrane region" description="Helical" evidence="1">
    <location>
        <begin position="165"/>
        <end position="185"/>
    </location>
</feature>
<feature type="transmembrane region" description="Helical" evidence="1">
    <location>
        <begin position="204"/>
        <end position="224"/>
    </location>
</feature>
<feature type="transmembrane region" description="Helical" evidence="1">
    <location>
        <begin position="255"/>
        <end position="275"/>
    </location>
</feature>
<feature type="transmembrane region" description="Helical" evidence="1">
    <location>
        <begin position="288"/>
        <end position="308"/>
    </location>
</feature>
<feature type="transmembrane region" description="Helical" evidence="1">
    <location>
        <begin position="315"/>
        <end position="335"/>
    </location>
</feature>
<feature type="transmembrane region" description="Helical" evidence="1">
    <location>
        <begin position="346"/>
        <end position="366"/>
    </location>
</feature>
<feature type="transmembrane region" description="Helical" evidence="1">
    <location>
        <begin position="382"/>
        <end position="402"/>
    </location>
</feature>
<feature type="transmembrane region" description="Helical" evidence="1">
    <location>
        <begin position="406"/>
        <end position="426"/>
    </location>
</feature>
<gene>
    <name evidence="1" type="primary">arnT</name>
    <name type="ordered locus">EC55989_2504</name>
</gene>
<sequence length="550" mass="62514">MKSVRYLIGLFAFIACYYLLPISTRLLWQPDETRYAEISREMLASGDWIVPHLLGLRYFEKPIAGYWINSIGQWLFGANNFGVRAGVIFATLLTAALVTWFTLRLWRDKRLALLATVIYLSLFIVYAIGTYAVLDPFIAFWLVAGMCSFWLAMQAQAWKGKSAGFLLLGITCGMGVMTKGFLALAVPVLSVLPWVATQKRWKDLFIYGWLAVISCVLTVLPWGLAIAQREPDFWHYFFWVEHIQRFALDDAQHRAPFWYYVPVIIAGSLPWLGLLPGALYTGWKNRKHSATVYLLSWTIMPLLFFSVAKGKLPTYILSCFAPLAMLMAHYALLAAKNNPLALRINGWINIAFGVTGIIATFVVSPWGPMNTPVWQTFESYKVFCAWSIFSLWAFFGWYTLTNVEKTWSFAALCPLGLALLVGFSIPDRVMEGKHPQFFVEMTQESLQPSRYILTDSVGVAAGLAWSLQRDDIIMYRQTGELKYGLNYPDAKGRFVSGDEFANWLNQHRQEGIITLVLSVDRDEDINSLAIPPADAIDRQERLVLIQYRPK</sequence>
<keyword id="KW-0997">Cell inner membrane</keyword>
<keyword id="KW-1003">Cell membrane</keyword>
<keyword id="KW-0328">Glycosyltransferase</keyword>
<keyword id="KW-0441">Lipid A biosynthesis</keyword>
<keyword id="KW-0444">Lipid biosynthesis</keyword>
<keyword id="KW-0443">Lipid metabolism</keyword>
<keyword id="KW-0448">Lipopolysaccharide biosynthesis</keyword>
<keyword id="KW-0472">Membrane</keyword>
<keyword id="KW-1185">Reference proteome</keyword>
<keyword id="KW-0808">Transferase</keyword>
<keyword id="KW-0812">Transmembrane</keyword>
<keyword id="KW-1133">Transmembrane helix</keyword>